<protein>
    <recommendedName>
        <fullName evidence="1">Ribonuclease H</fullName>
        <shortName evidence="1">RNase H</shortName>
        <ecNumber evidence="1">3.1.26.4</ecNumber>
    </recommendedName>
</protein>
<dbReference type="EC" id="3.1.26.4" evidence="1"/>
<dbReference type="EMBL" id="BX571862">
    <property type="protein sequence ID" value="CAE13237.1"/>
    <property type="molecule type" value="Genomic_DNA"/>
</dbReference>
<dbReference type="RefSeq" id="WP_011145307.1">
    <property type="nucleotide sequence ID" value="NC_005126.1"/>
</dbReference>
<dbReference type="SMR" id="Q7N807"/>
<dbReference type="STRING" id="243265.plu0942"/>
<dbReference type="GeneID" id="48847231"/>
<dbReference type="KEGG" id="plu:plu0942"/>
<dbReference type="eggNOG" id="COG0328">
    <property type="taxonomic scope" value="Bacteria"/>
</dbReference>
<dbReference type="HOGENOM" id="CLU_030894_6_0_6"/>
<dbReference type="OrthoDB" id="7845843at2"/>
<dbReference type="Proteomes" id="UP000002514">
    <property type="component" value="Chromosome"/>
</dbReference>
<dbReference type="GO" id="GO:0005737">
    <property type="term" value="C:cytoplasm"/>
    <property type="evidence" value="ECO:0007669"/>
    <property type="project" value="UniProtKB-SubCell"/>
</dbReference>
<dbReference type="GO" id="GO:0000287">
    <property type="term" value="F:magnesium ion binding"/>
    <property type="evidence" value="ECO:0007669"/>
    <property type="project" value="UniProtKB-UniRule"/>
</dbReference>
<dbReference type="GO" id="GO:0003676">
    <property type="term" value="F:nucleic acid binding"/>
    <property type="evidence" value="ECO:0007669"/>
    <property type="project" value="InterPro"/>
</dbReference>
<dbReference type="GO" id="GO:0004523">
    <property type="term" value="F:RNA-DNA hybrid ribonuclease activity"/>
    <property type="evidence" value="ECO:0007669"/>
    <property type="project" value="UniProtKB-UniRule"/>
</dbReference>
<dbReference type="GO" id="GO:0043137">
    <property type="term" value="P:DNA replication, removal of RNA primer"/>
    <property type="evidence" value="ECO:0007669"/>
    <property type="project" value="TreeGrafter"/>
</dbReference>
<dbReference type="CDD" id="cd09278">
    <property type="entry name" value="RNase_HI_prokaryote_like"/>
    <property type="match status" value="1"/>
</dbReference>
<dbReference type="FunFam" id="3.30.420.10:FF:000008">
    <property type="entry name" value="Ribonuclease H"/>
    <property type="match status" value="1"/>
</dbReference>
<dbReference type="Gene3D" id="3.30.420.10">
    <property type="entry name" value="Ribonuclease H-like superfamily/Ribonuclease H"/>
    <property type="match status" value="1"/>
</dbReference>
<dbReference type="HAMAP" id="MF_00042">
    <property type="entry name" value="RNase_H"/>
    <property type="match status" value="1"/>
</dbReference>
<dbReference type="InterPro" id="IPR050092">
    <property type="entry name" value="RNase_H"/>
</dbReference>
<dbReference type="InterPro" id="IPR012337">
    <property type="entry name" value="RNaseH-like_sf"/>
</dbReference>
<dbReference type="InterPro" id="IPR002156">
    <property type="entry name" value="RNaseH_domain"/>
</dbReference>
<dbReference type="InterPro" id="IPR036397">
    <property type="entry name" value="RNaseH_sf"/>
</dbReference>
<dbReference type="InterPro" id="IPR022892">
    <property type="entry name" value="RNaseHI"/>
</dbReference>
<dbReference type="NCBIfam" id="NF001236">
    <property type="entry name" value="PRK00203.1"/>
    <property type="match status" value="1"/>
</dbReference>
<dbReference type="PANTHER" id="PTHR10642">
    <property type="entry name" value="RIBONUCLEASE H1"/>
    <property type="match status" value="1"/>
</dbReference>
<dbReference type="PANTHER" id="PTHR10642:SF26">
    <property type="entry name" value="RIBONUCLEASE H1"/>
    <property type="match status" value="1"/>
</dbReference>
<dbReference type="Pfam" id="PF00075">
    <property type="entry name" value="RNase_H"/>
    <property type="match status" value="1"/>
</dbReference>
<dbReference type="SUPFAM" id="SSF53098">
    <property type="entry name" value="Ribonuclease H-like"/>
    <property type="match status" value="1"/>
</dbReference>
<dbReference type="PROSITE" id="PS50879">
    <property type="entry name" value="RNASE_H_1"/>
    <property type="match status" value="1"/>
</dbReference>
<sequence>MGKQVEIFTDGSCLGNPGPGGYGVLLRYQQHEKTLSEGFYHTTNNRMELMAAIIGLETLTRPCKIVLTTDSQYVRQGITQWIHNWKKRGWRKADKSPVSNVDLWQRLDQAISRHNIDWQWVKGHAGHDENERCDELARAAANSPTETDTGYLENRD</sequence>
<organism>
    <name type="scientific">Photorhabdus laumondii subsp. laumondii (strain DSM 15139 / CIP 105565 / TT01)</name>
    <name type="common">Photorhabdus luminescens subsp. laumondii</name>
    <dbReference type="NCBI Taxonomy" id="243265"/>
    <lineage>
        <taxon>Bacteria</taxon>
        <taxon>Pseudomonadati</taxon>
        <taxon>Pseudomonadota</taxon>
        <taxon>Gammaproteobacteria</taxon>
        <taxon>Enterobacterales</taxon>
        <taxon>Morganellaceae</taxon>
        <taxon>Photorhabdus</taxon>
    </lineage>
</organism>
<gene>
    <name evidence="1" type="primary">rnhA</name>
    <name type="ordered locus">plu0942</name>
</gene>
<accession>Q7N807</accession>
<proteinExistence type="inferred from homology"/>
<evidence type="ECO:0000255" key="1">
    <source>
        <dbReference type="HAMAP-Rule" id="MF_00042"/>
    </source>
</evidence>
<evidence type="ECO:0000255" key="2">
    <source>
        <dbReference type="PROSITE-ProRule" id="PRU00408"/>
    </source>
</evidence>
<name>RNH_PHOLL</name>
<keyword id="KW-0963">Cytoplasm</keyword>
<keyword id="KW-0255">Endonuclease</keyword>
<keyword id="KW-0378">Hydrolase</keyword>
<keyword id="KW-0460">Magnesium</keyword>
<keyword id="KW-0479">Metal-binding</keyword>
<keyword id="KW-0540">Nuclease</keyword>
<keyword id="KW-1185">Reference proteome</keyword>
<comment type="function">
    <text evidence="1">Endonuclease that specifically degrades the RNA of RNA-DNA hybrids.</text>
</comment>
<comment type="catalytic activity">
    <reaction evidence="1">
        <text>Endonucleolytic cleavage to 5'-phosphomonoester.</text>
        <dbReference type="EC" id="3.1.26.4"/>
    </reaction>
</comment>
<comment type="cofactor">
    <cofactor evidence="1">
        <name>Mg(2+)</name>
        <dbReference type="ChEBI" id="CHEBI:18420"/>
    </cofactor>
    <text evidence="1">Binds 1 Mg(2+) ion per subunit. May bind a second metal ion at a regulatory site, or after substrate binding.</text>
</comment>
<comment type="subunit">
    <text evidence="1">Monomer.</text>
</comment>
<comment type="subcellular location">
    <subcellularLocation>
        <location evidence="1">Cytoplasm</location>
    </subcellularLocation>
</comment>
<comment type="similarity">
    <text evidence="1">Belongs to the RNase H family.</text>
</comment>
<feature type="chain" id="PRO_0000195387" description="Ribonuclease H">
    <location>
        <begin position="1"/>
        <end position="156"/>
    </location>
</feature>
<feature type="domain" description="RNase H type-1" evidence="2">
    <location>
        <begin position="1"/>
        <end position="142"/>
    </location>
</feature>
<feature type="binding site" evidence="1">
    <location>
        <position position="10"/>
    </location>
    <ligand>
        <name>Mg(2+)</name>
        <dbReference type="ChEBI" id="CHEBI:18420"/>
        <label>1</label>
    </ligand>
</feature>
<feature type="binding site" evidence="1">
    <location>
        <position position="10"/>
    </location>
    <ligand>
        <name>Mg(2+)</name>
        <dbReference type="ChEBI" id="CHEBI:18420"/>
        <label>2</label>
    </ligand>
</feature>
<feature type="binding site" evidence="1">
    <location>
        <position position="48"/>
    </location>
    <ligand>
        <name>Mg(2+)</name>
        <dbReference type="ChEBI" id="CHEBI:18420"/>
        <label>1</label>
    </ligand>
</feature>
<feature type="binding site" evidence="1">
    <location>
        <position position="70"/>
    </location>
    <ligand>
        <name>Mg(2+)</name>
        <dbReference type="ChEBI" id="CHEBI:18420"/>
        <label>1</label>
    </ligand>
</feature>
<feature type="binding site" evidence="1">
    <location>
        <position position="134"/>
    </location>
    <ligand>
        <name>Mg(2+)</name>
        <dbReference type="ChEBI" id="CHEBI:18420"/>
        <label>2</label>
    </ligand>
</feature>
<reference key="1">
    <citation type="journal article" date="2003" name="Nat. Biotechnol.">
        <title>The genome sequence of the entomopathogenic bacterium Photorhabdus luminescens.</title>
        <authorList>
            <person name="Duchaud E."/>
            <person name="Rusniok C."/>
            <person name="Frangeul L."/>
            <person name="Buchrieser C."/>
            <person name="Givaudan A."/>
            <person name="Taourit S."/>
            <person name="Bocs S."/>
            <person name="Boursaux-Eude C."/>
            <person name="Chandler M."/>
            <person name="Charles J.-F."/>
            <person name="Dassa E."/>
            <person name="Derose R."/>
            <person name="Derzelle S."/>
            <person name="Freyssinet G."/>
            <person name="Gaudriault S."/>
            <person name="Medigue C."/>
            <person name="Lanois A."/>
            <person name="Powell K."/>
            <person name="Siguier P."/>
            <person name="Vincent R."/>
            <person name="Wingate V."/>
            <person name="Zouine M."/>
            <person name="Glaser P."/>
            <person name="Boemare N."/>
            <person name="Danchin A."/>
            <person name="Kunst F."/>
        </authorList>
    </citation>
    <scope>NUCLEOTIDE SEQUENCE [LARGE SCALE GENOMIC DNA]</scope>
    <source>
        <strain>DSM 15139 / CIP 105565 / TT01</strain>
    </source>
</reference>